<reference key="1">
    <citation type="journal article" date="2002" name="Mamm. Genome">
        <title>Characterization of a novel gene adjacent to PAX6, revealing synteny conservation with functional significance.</title>
        <authorList>
            <person name="Kleinjan D.A."/>
            <person name="Seawright A."/>
            <person name="Elgar G."/>
            <person name="van Heyningen V."/>
        </authorList>
    </citation>
    <scope>NUCLEOTIDE SEQUENCE [MRNA]</scope>
</reference>
<reference key="2">
    <citation type="journal article" date="2005" name="Science">
        <title>The transcriptional landscape of the mammalian genome.</title>
        <authorList>
            <person name="Carninci P."/>
            <person name="Kasukawa T."/>
            <person name="Katayama S."/>
            <person name="Gough J."/>
            <person name="Frith M.C."/>
            <person name="Maeda N."/>
            <person name="Oyama R."/>
            <person name="Ravasi T."/>
            <person name="Lenhard B."/>
            <person name="Wells C."/>
            <person name="Kodzius R."/>
            <person name="Shimokawa K."/>
            <person name="Bajic V.B."/>
            <person name="Brenner S.E."/>
            <person name="Batalov S."/>
            <person name="Forrest A.R."/>
            <person name="Zavolan M."/>
            <person name="Davis M.J."/>
            <person name="Wilming L.G."/>
            <person name="Aidinis V."/>
            <person name="Allen J.E."/>
            <person name="Ambesi-Impiombato A."/>
            <person name="Apweiler R."/>
            <person name="Aturaliya R.N."/>
            <person name="Bailey T.L."/>
            <person name="Bansal M."/>
            <person name="Baxter L."/>
            <person name="Beisel K.W."/>
            <person name="Bersano T."/>
            <person name="Bono H."/>
            <person name="Chalk A.M."/>
            <person name="Chiu K.P."/>
            <person name="Choudhary V."/>
            <person name="Christoffels A."/>
            <person name="Clutterbuck D.R."/>
            <person name="Crowe M.L."/>
            <person name="Dalla E."/>
            <person name="Dalrymple B.P."/>
            <person name="de Bono B."/>
            <person name="Della Gatta G."/>
            <person name="di Bernardo D."/>
            <person name="Down T."/>
            <person name="Engstrom P."/>
            <person name="Fagiolini M."/>
            <person name="Faulkner G."/>
            <person name="Fletcher C.F."/>
            <person name="Fukushima T."/>
            <person name="Furuno M."/>
            <person name="Futaki S."/>
            <person name="Gariboldi M."/>
            <person name="Georgii-Hemming P."/>
            <person name="Gingeras T.R."/>
            <person name="Gojobori T."/>
            <person name="Green R.E."/>
            <person name="Gustincich S."/>
            <person name="Harbers M."/>
            <person name="Hayashi Y."/>
            <person name="Hensch T.K."/>
            <person name="Hirokawa N."/>
            <person name="Hill D."/>
            <person name="Huminiecki L."/>
            <person name="Iacono M."/>
            <person name="Ikeo K."/>
            <person name="Iwama A."/>
            <person name="Ishikawa T."/>
            <person name="Jakt M."/>
            <person name="Kanapin A."/>
            <person name="Katoh M."/>
            <person name="Kawasawa Y."/>
            <person name="Kelso J."/>
            <person name="Kitamura H."/>
            <person name="Kitano H."/>
            <person name="Kollias G."/>
            <person name="Krishnan S.P."/>
            <person name="Kruger A."/>
            <person name="Kummerfeld S.K."/>
            <person name="Kurochkin I.V."/>
            <person name="Lareau L.F."/>
            <person name="Lazarevic D."/>
            <person name="Lipovich L."/>
            <person name="Liu J."/>
            <person name="Liuni S."/>
            <person name="McWilliam S."/>
            <person name="Madan Babu M."/>
            <person name="Madera M."/>
            <person name="Marchionni L."/>
            <person name="Matsuda H."/>
            <person name="Matsuzawa S."/>
            <person name="Miki H."/>
            <person name="Mignone F."/>
            <person name="Miyake S."/>
            <person name="Morris K."/>
            <person name="Mottagui-Tabar S."/>
            <person name="Mulder N."/>
            <person name="Nakano N."/>
            <person name="Nakauchi H."/>
            <person name="Ng P."/>
            <person name="Nilsson R."/>
            <person name="Nishiguchi S."/>
            <person name="Nishikawa S."/>
            <person name="Nori F."/>
            <person name="Ohara O."/>
            <person name="Okazaki Y."/>
            <person name="Orlando V."/>
            <person name="Pang K.C."/>
            <person name="Pavan W.J."/>
            <person name="Pavesi G."/>
            <person name="Pesole G."/>
            <person name="Petrovsky N."/>
            <person name="Piazza S."/>
            <person name="Reed J."/>
            <person name="Reid J.F."/>
            <person name="Ring B.Z."/>
            <person name="Ringwald M."/>
            <person name="Rost B."/>
            <person name="Ruan Y."/>
            <person name="Salzberg S.L."/>
            <person name="Sandelin A."/>
            <person name="Schneider C."/>
            <person name="Schoenbach C."/>
            <person name="Sekiguchi K."/>
            <person name="Semple C.A."/>
            <person name="Seno S."/>
            <person name="Sessa L."/>
            <person name="Sheng Y."/>
            <person name="Shibata Y."/>
            <person name="Shimada H."/>
            <person name="Shimada K."/>
            <person name="Silva D."/>
            <person name="Sinclair B."/>
            <person name="Sperling S."/>
            <person name="Stupka E."/>
            <person name="Sugiura K."/>
            <person name="Sultana R."/>
            <person name="Takenaka Y."/>
            <person name="Taki K."/>
            <person name="Tammoja K."/>
            <person name="Tan S.L."/>
            <person name="Tang S."/>
            <person name="Taylor M.S."/>
            <person name="Tegner J."/>
            <person name="Teichmann S.A."/>
            <person name="Ueda H.R."/>
            <person name="van Nimwegen E."/>
            <person name="Verardo R."/>
            <person name="Wei C.L."/>
            <person name="Yagi K."/>
            <person name="Yamanishi H."/>
            <person name="Zabarovsky E."/>
            <person name="Zhu S."/>
            <person name="Zimmer A."/>
            <person name="Hide W."/>
            <person name="Bult C."/>
            <person name="Grimmond S.M."/>
            <person name="Teasdale R.D."/>
            <person name="Liu E.T."/>
            <person name="Brusic V."/>
            <person name="Quackenbush J."/>
            <person name="Wahlestedt C."/>
            <person name="Mattick J.S."/>
            <person name="Hume D.A."/>
            <person name="Kai C."/>
            <person name="Sasaki D."/>
            <person name="Tomaru Y."/>
            <person name="Fukuda S."/>
            <person name="Kanamori-Katayama M."/>
            <person name="Suzuki M."/>
            <person name="Aoki J."/>
            <person name="Arakawa T."/>
            <person name="Iida J."/>
            <person name="Imamura K."/>
            <person name="Itoh M."/>
            <person name="Kato T."/>
            <person name="Kawaji H."/>
            <person name="Kawagashira N."/>
            <person name="Kawashima T."/>
            <person name="Kojima M."/>
            <person name="Kondo S."/>
            <person name="Konno H."/>
            <person name="Nakano K."/>
            <person name="Ninomiya N."/>
            <person name="Nishio T."/>
            <person name="Okada M."/>
            <person name="Plessy C."/>
            <person name="Shibata K."/>
            <person name="Shiraki T."/>
            <person name="Suzuki S."/>
            <person name="Tagami M."/>
            <person name="Waki K."/>
            <person name="Watahiki A."/>
            <person name="Okamura-Oho Y."/>
            <person name="Suzuki H."/>
            <person name="Kawai J."/>
            <person name="Hayashizaki Y."/>
        </authorList>
    </citation>
    <scope>NUCLEOTIDE SEQUENCE [LARGE SCALE MRNA]</scope>
    <source>
        <strain>C57BL/6J</strain>
        <tissue>Diencephalon</tissue>
        <tissue>Embryo</tissue>
        <tissue>Spinal cord</tissue>
    </source>
</reference>
<reference key="3">
    <citation type="journal article" date="2009" name="PLoS Biol.">
        <title>Lineage-specific biology revealed by a finished genome assembly of the mouse.</title>
        <authorList>
            <person name="Church D.M."/>
            <person name="Goodstadt L."/>
            <person name="Hillier L.W."/>
            <person name="Zody M.C."/>
            <person name="Goldstein S."/>
            <person name="She X."/>
            <person name="Bult C.J."/>
            <person name="Agarwala R."/>
            <person name="Cherry J.L."/>
            <person name="DiCuccio M."/>
            <person name="Hlavina W."/>
            <person name="Kapustin Y."/>
            <person name="Meric P."/>
            <person name="Maglott D."/>
            <person name="Birtle Z."/>
            <person name="Marques A.C."/>
            <person name="Graves T."/>
            <person name="Zhou S."/>
            <person name="Teague B."/>
            <person name="Potamousis K."/>
            <person name="Churas C."/>
            <person name="Place M."/>
            <person name="Herschleb J."/>
            <person name="Runnheim R."/>
            <person name="Forrest D."/>
            <person name="Amos-Landgraf J."/>
            <person name="Schwartz D.C."/>
            <person name="Cheng Z."/>
            <person name="Lindblad-Toh K."/>
            <person name="Eichler E.E."/>
            <person name="Ponting C.P."/>
        </authorList>
    </citation>
    <scope>NUCLEOTIDE SEQUENCE [LARGE SCALE GENOMIC DNA]</scope>
    <source>
        <strain>C57BL/6J</strain>
    </source>
</reference>
<reference key="4">
    <citation type="journal article" date="2010" name="Cell">
        <title>A tissue-specific atlas of mouse protein phosphorylation and expression.</title>
        <authorList>
            <person name="Huttlin E.L."/>
            <person name="Jedrychowski M.P."/>
            <person name="Elias J.E."/>
            <person name="Goswami T."/>
            <person name="Rad R."/>
            <person name="Beausoleil S.A."/>
            <person name="Villen J."/>
            <person name="Haas W."/>
            <person name="Sowa M.E."/>
            <person name="Gygi S.P."/>
        </authorList>
    </citation>
    <scope>IDENTIFICATION BY MASS SPECTROMETRY [LARGE SCALE ANALYSIS]</scope>
    <source>
        <tissue>Brain</tissue>
        <tissue>Heart</tissue>
        <tissue>Spleen</tissue>
    </source>
</reference>
<reference key="5">
    <citation type="journal article" date="2018" name="Nat. Commun.">
        <title>Elongator mutation in mice induces neurodegeneration and ataxia-like behavior.</title>
        <authorList>
            <person name="Kojic M."/>
            <person name="Gaik M."/>
            <person name="Kiska B."/>
            <person name="Salerno-Kochan A."/>
            <person name="Hunt S."/>
            <person name="Tedoldi A."/>
            <person name="Mureev S."/>
            <person name="Jones A."/>
            <person name="Whittle B."/>
            <person name="Genovesi L.A."/>
            <person name="Adolphe C."/>
            <person name="Brown D.L."/>
            <person name="Stow J.L."/>
            <person name="Alexandrov K."/>
            <person name="Sah P."/>
            <person name="Glatt S."/>
            <person name="Wainwright B.J."/>
        </authorList>
    </citation>
    <scope>TISSUE SPECIFICITY</scope>
</reference>
<gene>
    <name type="primary">Elp4</name>
    <name type="synonym">Paxneb</name>
</gene>
<protein>
    <recommendedName>
        <fullName>Elongator complex protein 4</fullName>
    </recommendedName>
    <alternativeName>
        <fullName>PAX6 neighbor gene protein</fullName>
    </alternativeName>
</protein>
<accession>Q9ER73</accession>
<accession>Q8BGM1</accession>
<accession>Q8BVB1</accession>
<accession>Q8BZN8</accession>
<accession>Q9CTR2</accession>
<proteinExistence type="evidence at protein level"/>
<feature type="chain" id="PRO_0000284005" description="Elongator complex protein 4">
    <location>
        <begin position="1"/>
        <end position="422"/>
    </location>
</feature>
<feature type="region of interest" description="Disordered" evidence="2">
    <location>
        <begin position="1"/>
        <end position="49"/>
    </location>
</feature>
<feature type="sequence conflict" description="In Ref. 2; BAC28555." evidence="4" ref="2">
    <original>A</original>
    <variation>T</variation>
    <location>
        <position position="404"/>
    </location>
</feature>
<feature type="sequence conflict" description="In Ref. 2; BAC37523." evidence="4" ref="2">
    <original>G</original>
    <variation>D</variation>
    <location>
        <position position="409"/>
    </location>
</feature>
<feature type="sequence conflict" description="In Ref. 1; CAC08202." evidence="4" ref="1">
    <original>E</original>
    <variation>K</variation>
    <location>
        <position position="415"/>
    </location>
</feature>
<dbReference type="EMBL" id="AJ276004">
    <property type="protein sequence ID" value="CAC08202.1"/>
    <property type="molecule type" value="mRNA"/>
</dbReference>
<dbReference type="EMBL" id="AK020742">
    <property type="protein sequence ID" value="BAB32197.1"/>
    <property type="molecule type" value="mRNA"/>
</dbReference>
<dbReference type="EMBL" id="AK034040">
    <property type="protein sequence ID" value="BAC28555.1"/>
    <property type="molecule type" value="mRNA"/>
</dbReference>
<dbReference type="EMBL" id="AK034529">
    <property type="protein sequence ID" value="BAC28743.1"/>
    <property type="molecule type" value="mRNA"/>
</dbReference>
<dbReference type="EMBL" id="AK037104">
    <property type="protein sequence ID" value="BAC29704.1"/>
    <property type="molecule type" value="mRNA"/>
</dbReference>
<dbReference type="EMBL" id="AK039447">
    <property type="protein sequence ID" value="BAC30351.1"/>
    <property type="molecule type" value="mRNA"/>
</dbReference>
<dbReference type="EMBL" id="AK039758">
    <property type="protein sequence ID" value="BAC30441.1"/>
    <property type="molecule type" value="mRNA"/>
</dbReference>
<dbReference type="EMBL" id="AK079069">
    <property type="protein sequence ID" value="BAC37523.1"/>
    <property type="molecule type" value="mRNA"/>
</dbReference>
<dbReference type="EMBL" id="AK168964">
    <property type="protein sequence ID" value="BAE40769.1"/>
    <property type="molecule type" value="mRNA"/>
</dbReference>
<dbReference type="EMBL" id="AL512589">
    <property type="status" value="NOT_ANNOTATED_CDS"/>
    <property type="molecule type" value="Genomic_DNA"/>
</dbReference>
<dbReference type="EMBL" id="AL590380">
    <property type="status" value="NOT_ANNOTATED_CDS"/>
    <property type="molecule type" value="Genomic_DNA"/>
</dbReference>
<dbReference type="CCDS" id="CCDS16500.1"/>
<dbReference type="RefSeq" id="NP_076365.2">
    <property type="nucleotide sequence ID" value="NM_023876.4"/>
</dbReference>
<dbReference type="EMDB" id="EMD-15626"/>
<dbReference type="SMR" id="Q9ER73"/>
<dbReference type="BioGRID" id="218904">
    <property type="interactions" value="7"/>
</dbReference>
<dbReference type="FunCoup" id="Q9ER73">
    <property type="interactions" value="3303"/>
</dbReference>
<dbReference type="STRING" id="10090.ENSMUSP00000116575"/>
<dbReference type="GlyGen" id="Q9ER73">
    <property type="glycosylation" value="1 site, 1 O-linked glycan (1 site)"/>
</dbReference>
<dbReference type="iPTMnet" id="Q9ER73"/>
<dbReference type="PhosphoSitePlus" id="Q9ER73"/>
<dbReference type="SwissPalm" id="Q9ER73"/>
<dbReference type="PaxDb" id="10090-ENSMUSP00000116575"/>
<dbReference type="PeptideAtlas" id="Q9ER73"/>
<dbReference type="ProteomicsDB" id="275602"/>
<dbReference type="Pumba" id="Q9ER73"/>
<dbReference type="Antibodypedia" id="25549">
    <property type="antibodies" value="158 antibodies from 25 providers"/>
</dbReference>
<dbReference type="DNASU" id="77766"/>
<dbReference type="Ensembl" id="ENSMUST00000122965.8">
    <property type="protein sequence ID" value="ENSMUSP00000116575.2"/>
    <property type="gene ID" value="ENSMUSG00000027167.12"/>
</dbReference>
<dbReference type="GeneID" id="77766"/>
<dbReference type="KEGG" id="mmu:77766"/>
<dbReference type="UCSC" id="uc008lld.1">
    <property type="organism name" value="mouse"/>
</dbReference>
<dbReference type="AGR" id="MGI:1925016"/>
<dbReference type="CTD" id="26610"/>
<dbReference type="MGI" id="MGI:1925016">
    <property type="gene designation" value="Elp4"/>
</dbReference>
<dbReference type="VEuPathDB" id="HostDB:ENSMUSG00000027167"/>
<dbReference type="eggNOG" id="KOG3949">
    <property type="taxonomic scope" value="Eukaryota"/>
</dbReference>
<dbReference type="GeneTree" id="ENSGT00390000001443"/>
<dbReference type="HOGENOM" id="CLU_031345_3_1_1"/>
<dbReference type="InParanoid" id="Q9ER73"/>
<dbReference type="OMA" id="NTTMWDD"/>
<dbReference type="OrthoDB" id="289162at2759"/>
<dbReference type="PhylomeDB" id="Q9ER73"/>
<dbReference type="TreeFam" id="TF320797"/>
<dbReference type="UniPathway" id="UPA00988"/>
<dbReference type="BioGRID-ORCS" id="77766">
    <property type="hits" value="23 hits in 79 CRISPR screens"/>
</dbReference>
<dbReference type="ChiTaRS" id="Elp4">
    <property type="organism name" value="mouse"/>
</dbReference>
<dbReference type="PRO" id="PR:Q9ER73"/>
<dbReference type="Proteomes" id="UP000000589">
    <property type="component" value="Chromosome 2"/>
</dbReference>
<dbReference type="RNAct" id="Q9ER73">
    <property type="molecule type" value="protein"/>
</dbReference>
<dbReference type="Bgee" id="ENSMUSG00000027167">
    <property type="expression patterns" value="Expressed in epithelium of lens and 237 other cell types or tissues"/>
</dbReference>
<dbReference type="ExpressionAtlas" id="Q9ER73">
    <property type="expression patterns" value="baseline and differential"/>
</dbReference>
<dbReference type="GO" id="GO:0005737">
    <property type="term" value="C:cytoplasm"/>
    <property type="evidence" value="ECO:0000250"/>
    <property type="project" value="UniProtKB"/>
</dbReference>
<dbReference type="GO" id="GO:0033588">
    <property type="term" value="C:elongator holoenzyme complex"/>
    <property type="evidence" value="ECO:0000250"/>
    <property type="project" value="UniProtKB"/>
</dbReference>
<dbReference type="GO" id="GO:0008023">
    <property type="term" value="C:transcription elongation factor complex"/>
    <property type="evidence" value="ECO:0000250"/>
    <property type="project" value="UniProtKB"/>
</dbReference>
<dbReference type="GO" id="GO:0008607">
    <property type="term" value="F:phosphorylase kinase regulator activity"/>
    <property type="evidence" value="ECO:0000250"/>
    <property type="project" value="UniProtKB"/>
</dbReference>
<dbReference type="GO" id="GO:0000993">
    <property type="term" value="F:RNA polymerase II complex binding"/>
    <property type="evidence" value="ECO:0007669"/>
    <property type="project" value="Ensembl"/>
</dbReference>
<dbReference type="GO" id="GO:0006357">
    <property type="term" value="P:regulation of transcription by RNA polymerase II"/>
    <property type="evidence" value="ECO:0000250"/>
    <property type="project" value="UniProtKB"/>
</dbReference>
<dbReference type="GO" id="GO:0002098">
    <property type="term" value="P:tRNA wobble uridine modification"/>
    <property type="evidence" value="ECO:0007669"/>
    <property type="project" value="InterPro"/>
</dbReference>
<dbReference type="CDD" id="cd19494">
    <property type="entry name" value="Elp4"/>
    <property type="match status" value="1"/>
</dbReference>
<dbReference type="FunFam" id="3.40.50.300:FF:000623">
    <property type="entry name" value="Elongator acetyltransferase complex subunit 4"/>
    <property type="match status" value="1"/>
</dbReference>
<dbReference type="Gene3D" id="3.40.50.300">
    <property type="entry name" value="P-loop containing nucleotide triphosphate hydrolases"/>
    <property type="match status" value="1"/>
</dbReference>
<dbReference type="InterPro" id="IPR008728">
    <property type="entry name" value="Elongator_complex_protein_4"/>
</dbReference>
<dbReference type="InterPro" id="IPR027417">
    <property type="entry name" value="P-loop_NTPase"/>
</dbReference>
<dbReference type="PANTHER" id="PTHR12896:SF1">
    <property type="entry name" value="ELONGATOR COMPLEX PROTEIN 4"/>
    <property type="match status" value="1"/>
</dbReference>
<dbReference type="PANTHER" id="PTHR12896">
    <property type="entry name" value="PAX6 NEIGHBOR PROTEIN PAXNEB"/>
    <property type="match status" value="1"/>
</dbReference>
<dbReference type="Pfam" id="PF05625">
    <property type="entry name" value="PAXNEB"/>
    <property type="match status" value="1"/>
</dbReference>
<comment type="function">
    <text evidence="1">Component of the elongator complex which is required for multiple tRNA modifications, including mcm5U (5-methoxycarbonylmethyl uridine), mcm5s2U (5-methoxycarbonylmethyl-2-thiouridine), and ncm5U (5-carbamoylmethyl uridine). The elongator complex catalyzes the formation of carboxymethyluridine in the wobble base at position 34 in tRNAs.</text>
</comment>
<comment type="pathway">
    <text evidence="1">tRNA modification; 5-methoxycarbonylmethyl-2-thiouridine-tRNA biosynthesis.</text>
</comment>
<comment type="subunit">
    <text evidence="1">Component of the elongator complex which consists of ELP1, ELP2, ELP3, ELP4, ELP5 and ELP6.</text>
</comment>
<comment type="subcellular location">
    <subcellularLocation>
        <location evidence="1">Cytoplasm</location>
    </subcellularLocation>
    <subcellularLocation>
        <location evidence="1">Nucleus</location>
    </subcellularLocation>
</comment>
<comment type="tissue specificity">
    <text evidence="3">Expressed throughout the cerebellum.</text>
</comment>
<comment type="similarity">
    <text evidence="4">Belongs to the ELP4 family.</text>
</comment>
<comment type="caution">
    <text evidence="1">The elongator complex was originally thought to play a role in transcription elongation. However, it is no longer thought to play a direct role in this process and its primary function is thought to be in tRNA modification.</text>
</comment>
<organism>
    <name type="scientific">Mus musculus</name>
    <name type="common">Mouse</name>
    <dbReference type="NCBI Taxonomy" id="10090"/>
    <lineage>
        <taxon>Eukaryota</taxon>
        <taxon>Metazoa</taxon>
        <taxon>Chordata</taxon>
        <taxon>Craniata</taxon>
        <taxon>Vertebrata</taxon>
        <taxon>Euteleostomi</taxon>
        <taxon>Mammalia</taxon>
        <taxon>Eutheria</taxon>
        <taxon>Euarchontoglires</taxon>
        <taxon>Glires</taxon>
        <taxon>Rodentia</taxon>
        <taxon>Myomorpha</taxon>
        <taxon>Muroidea</taxon>
        <taxon>Muridae</taxon>
        <taxon>Murinae</taxon>
        <taxon>Mus</taxon>
        <taxon>Mus</taxon>
    </lineage>
</organism>
<sequence length="422" mass="46325">MAAADTCGAGTLSSRSVASEAGQGGTSSFQRKGKASGGPGGGPRLLSIAGTRPSVRNGQLLVSTGLPALDQLLGGGLAVGTLLLIEEDKYNIYSPLLFKYFMAEGIINGHTLLVASAKENPAKILQELPAPLLDDNSKKELEDVHSAKTPEPNVNMKIAWRYQLQPKMEVGPVSSSRFGHYYDLSKRIPWELLQSSKWHGFFLPEHISPDLKGESCFLSCGYMRLLEFIQKSVYAEGFDGANPQKKQKNILRIGIQNLGSPLWGDDICCKENCDNNHRLTKFLYILRGLLRSSLSACIITMPAHLVQNKSITTRVRNLSDTVVGLESFIGSERETNPLYKDYHGLIHIRKIPRLNNLTCDESDVKDLAFKLKRKLFTIERLHLPPDLSDTVGRSSKQDLAASTARLGAGCSSMAEGKKHLDF</sequence>
<name>ELP4_MOUSE</name>
<evidence type="ECO:0000250" key="1">
    <source>
        <dbReference type="UniProtKB" id="Q96EB1"/>
    </source>
</evidence>
<evidence type="ECO:0000256" key="2">
    <source>
        <dbReference type="SAM" id="MobiDB-lite"/>
    </source>
</evidence>
<evidence type="ECO:0000269" key="3">
    <source>
    </source>
</evidence>
<evidence type="ECO:0000305" key="4"/>
<keyword id="KW-0963">Cytoplasm</keyword>
<keyword id="KW-0539">Nucleus</keyword>
<keyword id="KW-1185">Reference proteome</keyword>
<keyword id="KW-0819">tRNA processing</keyword>